<evidence type="ECO:0000255" key="1">
    <source>
        <dbReference type="HAMAP-Rule" id="MF_00347"/>
    </source>
</evidence>
<evidence type="ECO:0000256" key="2">
    <source>
        <dbReference type="SAM" id="MobiDB-lite"/>
    </source>
</evidence>
<comment type="function">
    <text evidence="1">Catalyzes the reversible transfer of the terminal phosphate of ATP to form a long-chain polyphosphate (polyP).</text>
</comment>
<comment type="catalytic activity">
    <reaction evidence="1">
        <text>[phosphate](n) + ATP = [phosphate](n+1) + ADP</text>
        <dbReference type="Rhea" id="RHEA:19573"/>
        <dbReference type="Rhea" id="RHEA-COMP:9859"/>
        <dbReference type="Rhea" id="RHEA-COMP:14280"/>
        <dbReference type="ChEBI" id="CHEBI:16838"/>
        <dbReference type="ChEBI" id="CHEBI:30616"/>
        <dbReference type="ChEBI" id="CHEBI:456216"/>
        <dbReference type="EC" id="2.7.4.1"/>
    </reaction>
</comment>
<comment type="cofactor">
    <cofactor evidence="1">
        <name>Mg(2+)</name>
        <dbReference type="ChEBI" id="CHEBI:18420"/>
    </cofactor>
</comment>
<comment type="PTM">
    <text evidence="1">An intermediate of this reaction is the autophosphorylated ppk in which a phosphate is covalently linked to a histidine residue through a N-P bond.</text>
</comment>
<comment type="similarity">
    <text evidence="1">Belongs to the polyphosphate kinase 1 (PPK1) family.</text>
</comment>
<proteinExistence type="inferred from homology"/>
<dbReference type="EC" id="2.7.4.1" evidence="1"/>
<dbReference type="EMBL" id="CP000250">
    <property type="protein sequence ID" value="ABD07197.1"/>
    <property type="molecule type" value="Genomic_DNA"/>
</dbReference>
<dbReference type="RefSeq" id="WP_011441382.1">
    <property type="nucleotide sequence ID" value="NC_007778.1"/>
</dbReference>
<dbReference type="SMR" id="Q2IX63"/>
<dbReference type="STRING" id="316058.RPB_2492"/>
<dbReference type="KEGG" id="rpb:RPB_2492"/>
<dbReference type="eggNOG" id="COG0855">
    <property type="taxonomic scope" value="Bacteria"/>
</dbReference>
<dbReference type="HOGENOM" id="CLU_009678_5_0_5"/>
<dbReference type="OrthoDB" id="9761456at2"/>
<dbReference type="Proteomes" id="UP000008809">
    <property type="component" value="Chromosome"/>
</dbReference>
<dbReference type="GO" id="GO:0009358">
    <property type="term" value="C:polyphosphate kinase complex"/>
    <property type="evidence" value="ECO:0007669"/>
    <property type="project" value="InterPro"/>
</dbReference>
<dbReference type="GO" id="GO:0005524">
    <property type="term" value="F:ATP binding"/>
    <property type="evidence" value="ECO:0007669"/>
    <property type="project" value="UniProtKB-KW"/>
</dbReference>
<dbReference type="GO" id="GO:0046872">
    <property type="term" value="F:metal ion binding"/>
    <property type="evidence" value="ECO:0007669"/>
    <property type="project" value="UniProtKB-KW"/>
</dbReference>
<dbReference type="GO" id="GO:0008976">
    <property type="term" value="F:polyphosphate kinase activity"/>
    <property type="evidence" value="ECO:0007669"/>
    <property type="project" value="UniProtKB-UniRule"/>
</dbReference>
<dbReference type="GO" id="GO:0006799">
    <property type="term" value="P:polyphosphate biosynthetic process"/>
    <property type="evidence" value="ECO:0007669"/>
    <property type="project" value="UniProtKB-UniRule"/>
</dbReference>
<dbReference type="CDD" id="cd09165">
    <property type="entry name" value="PLDc_PaPPK1_C1_like"/>
    <property type="match status" value="1"/>
</dbReference>
<dbReference type="CDD" id="cd09168">
    <property type="entry name" value="PLDc_PaPPK1_C2_like"/>
    <property type="match status" value="1"/>
</dbReference>
<dbReference type="Gene3D" id="3.30.870.10">
    <property type="entry name" value="Endonuclease Chain A"/>
    <property type="match status" value="2"/>
</dbReference>
<dbReference type="Gene3D" id="3.30.1840.10">
    <property type="entry name" value="Polyphosphate kinase middle domain"/>
    <property type="match status" value="1"/>
</dbReference>
<dbReference type="Gene3D" id="1.20.58.310">
    <property type="entry name" value="Polyphosphate kinase N-terminal domain"/>
    <property type="match status" value="1"/>
</dbReference>
<dbReference type="HAMAP" id="MF_00347">
    <property type="entry name" value="Polyphosphate_kinase"/>
    <property type="match status" value="1"/>
</dbReference>
<dbReference type="InterPro" id="IPR003414">
    <property type="entry name" value="PP_kinase"/>
</dbReference>
<dbReference type="InterPro" id="IPR041108">
    <property type="entry name" value="PP_kinase_C_1"/>
</dbReference>
<dbReference type="InterPro" id="IPR024953">
    <property type="entry name" value="PP_kinase_middle"/>
</dbReference>
<dbReference type="InterPro" id="IPR036830">
    <property type="entry name" value="PP_kinase_middle_dom_sf"/>
</dbReference>
<dbReference type="InterPro" id="IPR025200">
    <property type="entry name" value="PPK_C_dom2"/>
</dbReference>
<dbReference type="InterPro" id="IPR025198">
    <property type="entry name" value="PPK_N_dom"/>
</dbReference>
<dbReference type="InterPro" id="IPR036832">
    <property type="entry name" value="PPK_N_dom_sf"/>
</dbReference>
<dbReference type="NCBIfam" id="TIGR03705">
    <property type="entry name" value="poly_P_kin"/>
    <property type="match status" value="1"/>
</dbReference>
<dbReference type="NCBIfam" id="NF003917">
    <property type="entry name" value="PRK05443.1-1"/>
    <property type="match status" value="1"/>
</dbReference>
<dbReference type="NCBIfam" id="NF003918">
    <property type="entry name" value="PRK05443.1-2"/>
    <property type="match status" value="1"/>
</dbReference>
<dbReference type="NCBIfam" id="NF003919">
    <property type="entry name" value="PRK05443.1-4"/>
    <property type="match status" value="1"/>
</dbReference>
<dbReference type="NCBIfam" id="NF003921">
    <property type="entry name" value="PRK05443.2-2"/>
    <property type="match status" value="1"/>
</dbReference>
<dbReference type="PANTHER" id="PTHR30218">
    <property type="entry name" value="POLYPHOSPHATE KINASE"/>
    <property type="match status" value="1"/>
</dbReference>
<dbReference type="PANTHER" id="PTHR30218:SF0">
    <property type="entry name" value="POLYPHOSPHATE KINASE"/>
    <property type="match status" value="1"/>
</dbReference>
<dbReference type="Pfam" id="PF02503">
    <property type="entry name" value="PP_kinase"/>
    <property type="match status" value="1"/>
</dbReference>
<dbReference type="Pfam" id="PF13090">
    <property type="entry name" value="PP_kinase_C"/>
    <property type="match status" value="1"/>
</dbReference>
<dbReference type="Pfam" id="PF17941">
    <property type="entry name" value="PP_kinase_C_1"/>
    <property type="match status" value="1"/>
</dbReference>
<dbReference type="Pfam" id="PF13089">
    <property type="entry name" value="PP_kinase_N"/>
    <property type="match status" value="1"/>
</dbReference>
<dbReference type="PIRSF" id="PIRSF015589">
    <property type="entry name" value="PP_kinase"/>
    <property type="match status" value="1"/>
</dbReference>
<dbReference type="SUPFAM" id="SSF56024">
    <property type="entry name" value="Phospholipase D/nuclease"/>
    <property type="match status" value="2"/>
</dbReference>
<dbReference type="SUPFAM" id="SSF143724">
    <property type="entry name" value="PHP14-like"/>
    <property type="match status" value="1"/>
</dbReference>
<dbReference type="SUPFAM" id="SSF140356">
    <property type="entry name" value="PPK N-terminal domain-like"/>
    <property type="match status" value="1"/>
</dbReference>
<feature type="chain" id="PRO_1000120506" description="Polyphosphate kinase">
    <location>
        <begin position="1"/>
        <end position="733"/>
    </location>
</feature>
<feature type="region of interest" description="Disordered" evidence="2">
    <location>
        <begin position="702"/>
        <end position="733"/>
    </location>
</feature>
<feature type="compositionally biased region" description="Basic and acidic residues" evidence="2">
    <location>
        <begin position="714"/>
        <end position="733"/>
    </location>
</feature>
<feature type="active site" description="Phosphohistidine intermediate" evidence="1">
    <location>
        <position position="453"/>
    </location>
</feature>
<feature type="binding site" evidence="1">
    <location>
        <position position="67"/>
    </location>
    <ligand>
        <name>ATP</name>
        <dbReference type="ChEBI" id="CHEBI:30616"/>
    </ligand>
</feature>
<feature type="binding site" evidence="1">
    <location>
        <position position="393"/>
    </location>
    <ligand>
        <name>Mg(2+)</name>
        <dbReference type="ChEBI" id="CHEBI:18420"/>
    </ligand>
</feature>
<feature type="binding site" evidence="1">
    <location>
        <position position="423"/>
    </location>
    <ligand>
        <name>Mg(2+)</name>
        <dbReference type="ChEBI" id="CHEBI:18420"/>
    </ligand>
</feature>
<feature type="binding site" evidence="1">
    <location>
        <position position="486"/>
    </location>
    <ligand>
        <name>ATP</name>
        <dbReference type="ChEBI" id="CHEBI:30616"/>
    </ligand>
</feature>
<feature type="binding site" evidence="1">
    <location>
        <position position="582"/>
    </location>
    <ligand>
        <name>ATP</name>
        <dbReference type="ChEBI" id="CHEBI:30616"/>
    </ligand>
</feature>
<feature type="binding site" evidence="1">
    <location>
        <position position="610"/>
    </location>
    <ligand>
        <name>ATP</name>
        <dbReference type="ChEBI" id="CHEBI:30616"/>
    </ligand>
</feature>
<reference key="1">
    <citation type="submission" date="2006-01" db="EMBL/GenBank/DDBJ databases">
        <title>Complete sequence of Rhodopseudomonas palustris HaA2.</title>
        <authorList>
            <consortium name="US DOE Joint Genome Institute"/>
            <person name="Copeland A."/>
            <person name="Lucas S."/>
            <person name="Lapidus A."/>
            <person name="Barry K."/>
            <person name="Detter J.C."/>
            <person name="Glavina T."/>
            <person name="Hammon N."/>
            <person name="Israni S."/>
            <person name="Pitluck S."/>
            <person name="Chain P."/>
            <person name="Malfatti S."/>
            <person name="Shin M."/>
            <person name="Vergez L."/>
            <person name="Schmutz J."/>
            <person name="Larimer F."/>
            <person name="Land M."/>
            <person name="Hauser L."/>
            <person name="Pelletier D.A."/>
            <person name="Kyrpides N."/>
            <person name="Anderson I."/>
            <person name="Oda Y."/>
            <person name="Harwood C.S."/>
            <person name="Richardson P."/>
        </authorList>
    </citation>
    <scope>NUCLEOTIDE SEQUENCE [LARGE SCALE GENOMIC DNA]</scope>
    <source>
        <strain>HaA2</strain>
    </source>
</reference>
<sequence>MDSDQIIVIEEKNGEAEPASVVAAGPERFINRELSWLHFNRRVLEEAVNPSHPVLERVRFLSISANNLDEFFMVRVAGIKAQVREGITERSPDGLTPAEQLVLINEAVSRLASDQQAIWRDLRGILTEAGIVLLDGRDATKSQRAWIEDHFLHNIFPLLTPLAIDPAHPFPFIPSLGFTIGLQLARVSDGKSMNALIRMPGKIDRFIRLPPNGKDQSVRLMTLEQATSLFIGRLFPGYVVKGQGSFRVIRDSELEIEEEAEDLVRLFETALKRRRRGSVIRLEVDSTMPEELRAFVQRALSTADDEVLLVDGVLAMNELSQLTRVDRPDLEFPPYVPRHPERVRDHGGDIFAAIRKKDLIVHHPYESFDVVVQFLQQATRDPDVVAIKQTLYRTSNNSPIVRALAEAAEAGKSVTALVELKARFDEEANIRWARDLERAGVQVVYGFLELKTHAKLSLVVRREGNTLTTYVHTGTGNYHPVTARIYTDLSYFTSDPIIGRDAARVFNYITGYAEPSDIEKMAVSPLTLRKRMLEHIRGETAFARHGKPAAIWLKMNSLVDPDIIDALYEASRAGVSVELVVRGICCLRPGVPGLSENIRVKSIIGRFLEHGRVYCFGNGHGLPSAKAAVYISSADMMPRNLDRRVEILCPLLNPTVHQQVLEQIMVANLKDTEQSWQLLPDGSSTRMKAAKGEEPFNVHNYFMTNPSLSGRGKSLKESSPRRLTRRSERHQSP</sequence>
<gene>
    <name evidence="1" type="primary">ppk</name>
    <name type="ordered locus">RPB_2492</name>
</gene>
<accession>Q2IX63</accession>
<organism>
    <name type="scientific">Rhodopseudomonas palustris (strain HaA2)</name>
    <dbReference type="NCBI Taxonomy" id="316058"/>
    <lineage>
        <taxon>Bacteria</taxon>
        <taxon>Pseudomonadati</taxon>
        <taxon>Pseudomonadota</taxon>
        <taxon>Alphaproteobacteria</taxon>
        <taxon>Hyphomicrobiales</taxon>
        <taxon>Nitrobacteraceae</taxon>
        <taxon>Rhodopseudomonas</taxon>
    </lineage>
</organism>
<keyword id="KW-0067">ATP-binding</keyword>
<keyword id="KW-0418">Kinase</keyword>
<keyword id="KW-0460">Magnesium</keyword>
<keyword id="KW-0479">Metal-binding</keyword>
<keyword id="KW-0547">Nucleotide-binding</keyword>
<keyword id="KW-0597">Phosphoprotein</keyword>
<keyword id="KW-1185">Reference proteome</keyword>
<keyword id="KW-0808">Transferase</keyword>
<name>PPK1_RHOP2</name>
<protein>
    <recommendedName>
        <fullName evidence="1">Polyphosphate kinase</fullName>
        <ecNumber evidence="1">2.7.4.1</ecNumber>
    </recommendedName>
    <alternativeName>
        <fullName evidence="1">ATP-polyphosphate phosphotransferase</fullName>
    </alternativeName>
    <alternativeName>
        <fullName evidence="1">Polyphosphoric acid kinase</fullName>
    </alternativeName>
</protein>